<proteinExistence type="inferred from homology"/>
<sequence>MEQRKCYFCGKMLEPGTGKLYVKKDGSTYFMCSSKCMSNFALGRLPRRTEWTEKGKIQLKKA</sequence>
<reference key="1">
    <citation type="journal article" date="2002" name="Genome Res.">
        <title>The genome of Methanosarcina acetivorans reveals extensive metabolic and physiological diversity.</title>
        <authorList>
            <person name="Galagan J.E."/>
            <person name="Nusbaum C."/>
            <person name="Roy A."/>
            <person name="Endrizzi M.G."/>
            <person name="Macdonald P."/>
            <person name="FitzHugh W."/>
            <person name="Calvo S."/>
            <person name="Engels R."/>
            <person name="Smirnov S."/>
            <person name="Atnoor D."/>
            <person name="Brown A."/>
            <person name="Allen N."/>
            <person name="Naylor J."/>
            <person name="Stange-Thomann N."/>
            <person name="DeArellano K."/>
            <person name="Johnson R."/>
            <person name="Linton L."/>
            <person name="McEwan P."/>
            <person name="McKernan K."/>
            <person name="Talamas J."/>
            <person name="Tirrell A."/>
            <person name="Ye W."/>
            <person name="Zimmer A."/>
            <person name="Barber R.D."/>
            <person name="Cann I."/>
            <person name="Graham D.E."/>
            <person name="Grahame D.A."/>
            <person name="Guss A.M."/>
            <person name="Hedderich R."/>
            <person name="Ingram-Smith C."/>
            <person name="Kuettner H.C."/>
            <person name="Krzycki J.A."/>
            <person name="Leigh J.A."/>
            <person name="Li W."/>
            <person name="Liu J."/>
            <person name="Mukhopadhyay B."/>
            <person name="Reeve J.N."/>
            <person name="Smith K."/>
            <person name="Springer T.A."/>
            <person name="Umayam L.A."/>
            <person name="White O."/>
            <person name="White R.H."/>
            <person name="de Macario E.C."/>
            <person name="Ferry J.G."/>
            <person name="Jarrell K.F."/>
            <person name="Jing H."/>
            <person name="Macario A.J.L."/>
            <person name="Paulsen I.T."/>
            <person name="Pritchett M."/>
            <person name="Sowers K.R."/>
            <person name="Swanson R.V."/>
            <person name="Zinder S.H."/>
            <person name="Lander E."/>
            <person name="Metcalf W.W."/>
            <person name="Birren B."/>
        </authorList>
    </citation>
    <scope>NUCLEOTIDE SEQUENCE [LARGE SCALE GENOMIC DNA]</scope>
    <source>
        <strain>ATCC 35395 / DSM 2834 / JCM 12185 / C2A</strain>
    </source>
</reference>
<dbReference type="EMBL" id="AE010299">
    <property type="protein sequence ID" value="AAM04937.1"/>
    <property type="molecule type" value="Genomic_DNA"/>
</dbReference>
<dbReference type="RefSeq" id="WP_011021537.1">
    <property type="nucleotide sequence ID" value="NC_003552.1"/>
</dbReference>
<dbReference type="SMR" id="Q8TQL7"/>
<dbReference type="FunCoup" id="Q8TQL7">
    <property type="interactions" value="59"/>
</dbReference>
<dbReference type="STRING" id="188937.MA_1523"/>
<dbReference type="EnsemblBacteria" id="AAM04937">
    <property type="protein sequence ID" value="AAM04937"/>
    <property type="gene ID" value="MA_1523"/>
</dbReference>
<dbReference type="GeneID" id="1473411"/>
<dbReference type="KEGG" id="mac:MA_1523"/>
<dbReference type="HOGENOM" id="CLU_190191_0_0_2"/>
<dbReference type="InParanoid" id="Q8TQL7"/>
<dbReference type="OrthoDB" id="55506at2157"/>
<dbReference type="PhylomeDB" id="Q8TQL7"/>
<dbReference type="Proteomes" id="UP000002487">
    <property type="component" value="Chromosome"/>
</dbReference>
<dbReference type="GO" id="GO:1990904">
    <property type="term" value="C:ribonucleoprotein complex"/>
    <property type="evidence" value="ECO:0007669"/>
    <property type="project" value="UniProtKB-KW"/>
</dbReference>
<dbReference type="GO" id="GO:0005840">
    <property type="term" value="C:ribosome"/>
    <property type="evidence" value="ECO:0007669"/>
    <property type="project" value="UniProtKB-KW"/>
</dbReference>
<dbReference type="GO" id="GO:0019843">
    <property type="term" value="F:rRNA binding"/>
    <property type="evidence" value="ECO:0007669"/>
    <property type="project" value="UniProtKB-UniRule"/>
</dbReference>
<dbReference type="GO" id="GO:0003735">
    <property type="term" value="F:structural constituent of ribosome"/>
    <property type="evidence" value="ECO:0007669"/>
    <property type="project" value="InterPro"/>
</dbReference>
<dbReference type="GO" id="GO:0008270">
    <property type="term" value="F:zinc ion binding"/>
    <property type="evidence" value="ECO:0007669"/>
    <property type="project" value="UniProtKB-UniRule"/>
</dbReference>
<dbReference type="GO" id="GO:0006412">
    <property type="term" value="P:translation"/>
    <property type="evidence" value="ECO:0007669"/>
    <property type="project" value="UniProtKB-UniRule"/>
</dbReference>
<dbReference type="CDD" id="cd00472">
    <property type="entry name" value="Ribosomal_L24e_L24"/>
    <property type="match status" value="1"/>
</dbReference>
<dbReference type="FunFam" id="2.30.170.20:FF:000006">
    <property type="entry name" value="50S ribosomal protein L24e"/>
    <property type="match status" value="1"/>
</dbReference>
<dbReference type="Gene3D" id="2.30.170.20">
    <property type="entry name" value="Ribosomal protein L24e"/>
    <property type="match status" value="1"/>
</dbReference>
<dbReference type="HAMAP" id="MF_00773">
    <property type="entry name" value="Ribosomal_eL24"/>
    <property type="match status" value="1"/>
</dbReference>
<dbReference type="InterPro" id="IPR038630">
    <property type="entry name" value="L24e/L24_sf"/>
</dbReference>
<dbReference type="InterPro" id="IPR055345">
    <property type="entry name" value="Ribosomal_eL24-rel_arc"/>
</dbReference>
<dbReference type="InterPro" id="IPR000988">
    <property type="entry name" value="Ribosomal_eL24-rel_N"/>
</dbReference>
<dbReference type="InterPro" id="IPR023442">
    <property type="entry name" value="Ribosomal_eL24_CS"/>
</dbReference>
<dbReference type="InterPro" id="IPR011017">
    <property type="entry name" value="TRASH_dom"/>
</dbReference>
<dbReference type="NCBIfam" id="NF034186">
    <property type="entry name" value="PRK14891.1-1"/>
    <property type="match status" value="1"/>
</dbReference>
<dbReference type="Pfam" id="PF01246">
    <property type="entry name" value="Ribosomal_L24e"/>
    <property type="match status" value="1"/>
</dbReference>
<dbReference type="SMART" id="SM00746">
    <property type="entry name" value="TRASH"/>
    <property type="match status" value="1"/>
</dbReference>
<dbReference type="SUPFAM" id="SSF57716">
    <property type="entry name" value="Glucocorticoid receptor-like (DNA-binding domain)"/>
    <property type="match status" value="1"/>
</dbReference>
<dbReference type="PROSITE" id="PS01073">
    <property type="entry name" value="RIBOSOMAL_L24E"/>
    <property type="match status" value="1"/>
</dbReference>
<keyword id="KW-0479">Metal-binding</keyword>
<keyword id="KW-1185">Reference proteome</keyword>
<keyword id="KW-0687">Ribonucleoprotein</keyword>
<keyword id="KW-0689">Ribosomal protein</keyword>
<keyword id="KW-0694">RNA-binding</keyword>
<keyword id="KW-0699">rRNA-binding</keyword>
<keyword id="KW-0862">Zinc</keyword>
<keyword id="KW-0863">Zinc-finger</keyword>
<protein>
    <recommendedName>
        <fullName evidence="1">Large ribosomal subunit protein eL24</fullName>
    </recommendedName>
    <alternativeName>
        <fullName evidence="2">50S ribosomal protein L24e</fullName>
    </alternativeName>
</protein>
<comment type="function">
    <text evidence="1">Binds to the 23S rRNA.</text>
</comment>
<comment type="cofactor">
    <cofactor evidence="1">
        <name>Zn(2+)</name>
        <dbReference type="ChEBI" id="CHEBI:29105"/>
    </cofactor>
    <text evidence="1">Binds 1 zinc ion per subunit.</text>
</comment>
<comment type="subunit">
    <text evidence="1">Part of the 50S ribosomal subunit. Forms a cluster with proteins L3 and L14.</text>
</comment>
<comment type="similarity">
    <text evidence="1">Belongs to the eukaryotic ribosomal protein eL24 family.</text>
</comment>
<gene>
    <name evidence="1" type="primary">rpl24e</name>
    <name type="ordered locus">MA_1523</name>
</gene>
<feature type="chain" id="PRO_0000136915" description="Large ribosomal subunit protein eL24">
    <location>
        <begin position="1"/>
        <end position="62"/>
    </location>
</feature>
<feature type="zinc finger region" description="C4-type" evidence="1">
    <location>
        <begin position="6"/>
        <end position="36"/>
    </location>
</feature>
<feature type="binding site" evidence="1">
    <location>
        <position position="6"/>
    </location>
    <ligand>
        <name>Zn(2+)</name>
        <dbReference type="ChEBI" id="CHEBI:29105"/>
    </ligand>
</feature>
<feature type="binding site" evidence="1">
    <location>
        <position position="9"/>
    </location>
    <ligand>
        <name>Zn(2+)</name>
        <dbReference type="ChEBI" id="CHEBI:29105"/>
    </ligand>
</feature>
<feature type="binding site" evidence="1">
    <location>
        <position position="32"/>
    </location>
    <ligand>
        <name>Zn(2+)</name>
        <dbReference type="ChEBI" id="CHEBI:29105"/>
    </ligand>
</feature>
<feature type="binding site" evidence="1">
    <location>
        <position position="36"/>
    </location>
    <ligand>
        <name>Zn(2+)</name>
        <dbReference type="ChEBI" id="CHEBI:29105"/>
    </ligand>
</feature>
<evidence type="ECO:0000255" key="1">
    <source>
        <dbReference type="HAMAP-Rule" id="MF_00773"/>
    </source>
</evidence>
<evidence type="ECO:0000305" key="2"/>
<name>RL24E_METAC</name>
<organism>
    <name type="scientific">Methanosarcina acetivorans (strain ATCC 35395 / DSM 2834 / JCM 12185 / C2A)</name>
    <dbReference type="NCBI Taxonomy" id="188937"/>
    <lineage>
        <taxon>Archaea</taxon>
        <taxon>Methanobacteriati</taxon>
        <taxon>Methanobacteriota</taxon>
        <taxon>Stenosarchaea group</taxon>
        <taxon>Methanomicrobia</taxon>
        <taxon>Methanosarcinales</taxon>
        <taxon>Methanosarcinaceae</taxon>
        <taxon>Methanosarcina</taxon>
    </lineage>
</organism>
<accession>Q8TQL7</accession>